<evidence type="ECO:0000255" key="1">
    <source>
        <dbReference type="HAMAP-Rule" id="MF_00211"/>
    </source>
</evidence>
<keyword id="KW-0028">Amino-acid biosynthesis</keyword>
<keyword id="KW-0057">Aromatic amino acid biosynthesis</keyword>
<keyword id="KW-0328">Glycosyltransferase</keyword>
<keyword id="KW-0460">Magnesium</keyword>
<keyword id="KW-0479">Metal-binding</keyword>
<keyword id="KW-0614">Plasmid</keyword>
<keyword id="KW-1185">Reference proteome</keyword>
<keyword id="KW-0808">Transferase</keyword>
<keyword id="KW-0822">Tryptophan biosynthesis</keyword>
<feature type="chain" id="PRO_0000154473" description="Anthranilate phosphoribosyltransferase 2">
    <location>
        <begin position="1"/>
        <end position="344"/>
    </location>
</feature>
<feature type="binding site" evidence="1">
    <location>
        <position position="81"/>
    </location>
    <ligand>
        <name>5-phospho-alpha-D-ribose 1-diphosphate</name>
        <dbReference type="ChEBI" id="CHEBI:58017"/>
    </ligand>
</feature>
<feature type="binding site" evidence="1">
    <location>
        <position position="81"/>
    </location>
    <ligand>
        <name>anthranilate</name>
        <dbReference type="ChEBI" id="CHEBI:16567"/>
        <label>1</label>
    </ligand>
</feature>
<feature type="binding site" evidence="1">
    <location>
        <begin position="84"/>
        <end position="85"/>
    </location>
    <ligand>
        <name>5-phospho-alpha-D-ribose 1-diphosphate</name>
        <dbReference type="ChEBI" id="CHEBI:58017"/>
    </ligand>
</feature>
<feature type="binding site" evidence="1">
    <location>
        <position position="89"/>
    </location>
    <ligand>
        <name>5-phospho-alpha-D-ribose 1-diphosphate</name>
        <dbReference type="ChEBI" id="CHEBI:58017"/>
    </ligand>
</feature>
<feature type="binding site" evidence="1">
    <location>
        <begin position="91"/>
        <end position="94"/>
    </location>
    <ligand>
        <name>5-phospho-alpha-D-ribose 1-diphosphate</name>
        <dbReference type="ChEBI" id="CHEBI:58017"/>
    </ligand>
</feature>
<feature type="binding site" evidence="1">
    <location>
        <position position="93"/>
    </location>
    <ligand>
        <name>Mg(2+)</name>
        <dbReference type="ChEBI" id="CHEBI:18420"/>
        <label>1</label>
    </ligand>
</feature>
<feature type="binding site" evidence="1">
    <location>
        <begin position="109"/>
        <end position="117"/>
    </location>
    <ligand>
        <name>5-phospho-alpha-D-ribose 1-diphosphate</name>
        <dbReference type="ChEBI" id="CHEBI:58017"/>
    </ligand>
</feature>
<feature type="binding site" evidence="1">
    <location>
        <position position="112"/>
    </location>
    <ligand>
        <name>anthranilate</name>
        <dbReference type="ChEBI" id="CHEBI:16567"/>
        <label>1</label>
    </ligand>
</feature>
<feature type="binding site" evidence="1">
    <location>
        <position position="121"/>
    </location>
    <ligand>
        <name>5-phospho-alpha-D-ribose 1-diphosphate</name>
        <dbReference type="ChEBI" id="CHEBI:58017"/>
    </ligand>
</feature>
<feature type="binding site" evidence="1">
    <location>
        <position position="167"/>
    </location>
    <ligand>
        <name>anthranilate</name>
        <dbReference type="ChEBI" id="CHEBI:16567"/>
        <label>2</label>
    </ligand>
</feature>
<feature type="binding site" evidence="1">
    <location>
        <position position="226"/>
    </location>
    <ligand>
        <name>Mg(2+)</name>
        <dbReference type="ChEBI" id="CHEBI:18420"/>
        <label>2</label>
    </ligand>
</feature>
<feature type="binding site" evidence="1">
    <location>
        <position position="227"/>
    </location>
    <ligand>
        <name>Mg(2+)</name>
        <dbReference type="ChEBI" id="CHEBI:18420"/>
        <label>1</label>
    </ligand>
</feature>
<feature type="binding site" evidence="1">
    <location>
        <position position="227"/>
    </location>
    <ligand>
        <name>Mg(2+)</name>
        <dbReference type="ChEBI" id="CHEBI:18420"/>
        <label>2</label>
    </ligand>
</feature>
<reference key="1">
    <citation type="journal article" date="2002" name="Nature">
        <title>Genome sequence of the plant pathogen Ralstonia solanacearum.</title>
        <authorList>
            <person name="Salanoubat M."/>
            <person name="Genin S."/>
            <person name="Artiguenave F."/>
            <person name="Gouzy J."/>
            <person name="Mangenot S."/>
            <person name="Arlat M."/>
            <person name="Billault A."/>
            <person name="Brottier P."/>
            <person name="Camus J.-C."/>
            <person name="Cattolico L."/>
            <person name="Chandler M."/>
            <person name="Choisne N."/>
            <person name="Claudel-Renard C."/>
            <person name="Cunnac S."/>
            <person name="Demange N."/>
            <person name="Gaspin C."/>
            <person name="Lavie M."/>
            <person name="Moisan A."/>
            <person name="Robert C."/>
            <person name="Saurin W."/>
            <person name="Schiex T."/>
            <person name="Siguier P."/>
            <person name="Thebault P."/>
            <person name="Whalen M."/>
            <person name="Wincker P."/>
            <person name="Levy M."/>
            <person name="Weissenbach J."/>
            <person name="Boucher C.A."/>
        </authorList>
    </citation>
    <scope>NUCLEOTIDE SEQUENCE [LARGE SCALE GENOMIC DNA]</scope>
    <source>
        <strain>ATCC BAA-1114 / GMI1000</strain>
    </source>
</reference>
<name>TRPD2_RALN1</name>
<proteinExistence type="inferred from homology"/>
<protein>
    <recommendedName>
        <fullName evidence="1">Anthranilate phosphoribosyltransferase 2</fullName>
        <ecNumber evidence="1">2.4.2.18</ecNumber>
    </recommendedName>
</protein>
<geneLocation type="plasmid">
    <name>megaplasmid Rsp</name>
</geneLocation>
<gene>
    <name evidence="1" type="primary">trpD2</name>
    <name type="ordered locus">RSp0681</name>
    <name type="ORF">RS01768</name>
</gene>
<dbReference type="EC" id="2.4.2.18" evidence="1"/>
<dbReference type="EMBL" id="AL646053">
    <property type="protein sequence ID" value="CAD17832.1"/>
    <property type="molecule type" value="Genomic_DNA"/>
</dbReference>
<dbReference type="RefSeq" id="WP_011003979.1">
    <property type="nucleotide sequence ID" value="NC_003296.1"/>
</dbReference>
<dbReference type="SMR" id="Q8XS00"/>
<dbReference type="STRING" id="267608.RSp0681"/>
<dbReference type="EnsemblBacteria" id="CAD17832">
    <property type="protein sequence ID" value="CAD17832"/>
    <property type="gene ID" value="RSp0681"/>
</dbReference>
<dbReference type="KEGG" id="rso:RSp0681"/>
<dbReference type="PATRIC" id="fig|267608.8.peg.4155"/>
<dbReference type="eggNOG" id="COG0547">
    <property type="taxonomic scope" value="Bacteria"/>
</dbReference>
<dbReference type="HOGENOM" id="CLU_034315_2_1_4"/>
<dbReference type="UniPathway" id="UPA00035">
    <property type="reaction ID" value="UER00041"/>
</dbReference>
<dbReference type="Proteomes" id="UP000001436">
    <property type="component" value="Plasmid megaplasmid Rsp"/>
</dbReference>
<dbReference type="GO" id="GO:0005829">
    <property type="term" value="C:cytosol"/>
    <property type="evidence" value="ECO:0007669"/>
    <property type="project" value="TreeGrafter"/>
</dbReference>
<dbReference type="GO" id="GO:0004048">
    <property type="term" value="F:anthranilate phosphoribosyltransferase activity"/>
    <property type="evidence" value="ECO:0007669"/>
    <property type="project" value="UniProtKB-UniRule"/>
</dbReference>
<dbReference type="GO" id="GO:0000287">
    <property type="term" value="F:magnesium ion binding"/>
    <property type="evidence" value="ECO:0007669"/>
    <property type="project" value="UniProtKB-UniRule"/>
</dbReference>
<dbReference type="GO" id="GO:0000162">
    <property type="term" value="P:L-tryptophan biosynthetic process"/>
    <property type="evidence" value="ECO:0007669"/>
    <property type="project" value="UniProtKB-UniRule"/>
</dbReference>
<dbReference type="FunFam" id="3.40.1030.10:FF:000002">
    <property type="entry name" value="Anthranilate phosphoribosyltransferase"/>
    <property type="match status" value="1"/>
</dbReference>
<dbReference type="Gene3D" id="3.40.1030.10">
    <property type="entry name" value="Nucleoside phosphorylase/phosphoribosyltransferase catalytic domain"/>
    <property type="match status" value="1"/>
</dbReference>
<dbReference type="Gene3D" id="1.20.970.10">
    <property type="entry name" value="Transferase, Pyrimidine Nucleoside Phosphorylase, Chain C"/>
    <property type="match status" value="1"/>
</dbReference>
<dbReference type="HAMAP" id="MF_00211">
    <property type="entry name" value="TrpD"/>
    <property type="match status" value="1"/>
</dbReference>
<dbReference type="InterPro" id="IPR005940">
    <property type="entry name" value="Anthranilate_Pribosyl_Tfrase"/>
</dbReference>
<dbReference type="InterPro" id="IPR000312">
    <property type="entry name" value="Glycosyl_Trfase_fam3"/>
</dbReference>
<dbReference type="InterPro" id="IPR017459">
    <property type="entry name" value="Glycosyl_Trfase_fam3_N_dom"/>
</dbReference>
<dbReference type="InterPro" id="IPR036320">
    <property type="entry name" value="Glycosyl_Trfase_fam3_N_dom_sf"/>
</dbReference>
<dbReference type="InterPro" id="IPR035902">
    <property type="entry name" value="Nuc_phospho_transferase"/>
</dbReference>
<dbReference type="NCBIfam" id="TIGR01245">
    <property type="entry name" value="trpD"/>
    <property type="match status" value="1"/>
</dbReference>
<dbReference type="PANTHER" id="PTHR43285">
    <property type="entry name" value="ANTHRANILATE PHOSPHORIBOSYLTRANSFERASE"/>
    <property type="match status" value="1"/>
</dbReference>
<dbReference type="PANTHER" id="PTHR43285:SF2">
    <property type="entry name" value="ANTHRANILATE PHOSPHORIBOSYLTRANSFERASE"/>
    <property type="match status" value="1"/>
</dbReference>
<dbReference type="Pfam" id="PF02885">
    <property type="entry name" value="Glycos_trans_3N"/>
    <property type="match status" value="1"/>
</dbReference>
<dbReference type="Pfam" id="PF00591">
    <property type="entry name" value="Glycos_transf_3"/>
    <property type="match status" value="1"/>
</dbReference>
<dbReference type="SUPFAM" id="SSF52418">
    <property type="entry name" value="Nucleoside phosphorylase/phosphoribosyltransferase catalytic domain"/>
    <property type="match status" value="1"/>
</dbReference>
<dbReference type="SUPFAM" id="SSF47648">
    <property type="entry name" value="Nucleoside phosphorylase/phosphoribosyltransferase N-terminal domain"/>
    <property type="match status" value="1"/>
</dbReference>
<sequence>MFDLKATIGRLAQGQTLGRQDAWMLFEQMAFGHASHAQLGALLMALRVRGETVEEIVGAALAMRARMVPVKAPADAVDIVGTGGDNAGTYNISTCAAFIVAGAGVPVAKHGNRALSSKSGAADVLSALGVNLDQTPADIERCIAEAGIGFMFAPTHHPALKQLMPVRVDLATRTIFNLLGPLLNPAGVRHHLIGVYSRAWVEPLAHALGDLGSERALVVHGSDGLDEITTVGPTFVSMLARGRVRSFEITPEMVGLVRANPAELKGADGKWNAVALRRVLEGQPGAYRDIALFNAAGGLIAAGVVENWPDAMALARASVDGGAALATLNRLVEASQPEGHVQPY</sequence>
<organism>
    <name type="scientific">Ralstonia nicotianae (strain ATCC BAA-1114 / GMI1000)</name>
    <name type="common">Ralstonia solanacearum</name>
    <dbReference type="NCBI Taxonomy" id="267608"/>
    <lineage>
        <taxon>Bacteria</taxon>
        <taxon>Pseudomonadati</taxon>
        <taxon>Pseudomonadota</taxon>
        <taxon>Betaproteobacteria</taxon>
        <taxon>Burkholderiales</taxon>
        <taxon>Burkholderiaceae</taxon>
        <taxon>Ralstonia</taxon>
        <taxon>Ralstonia solanacearum species complex</taxon>
    </lineage>
</organism>
<accession>Q8XS00</accession>
<comment type="function">
    <text evidence="1">Catalyzes the transfer of the phosphoribosyl group of 5-phosphorylribose-1-pyrophosphate (PRPP) to anthranilate to yield N-(5'-phosphoribosyl)-anthranilate (PRA).</text>
</comment>
<comment type="catalytic activity">
    <reaction evidence="1">
        <text>N-(5-phospho-beta-D-ribosyl)anthranilate + diphosphate = 5-phospho-alpha-D-ribose 1-diphosphate + anthranilate</text>
        <dbReference type="Rhea" id="RHEA:11768"/>
        <dbReference type="ChEBI" id="CHEBI:16567"/>
        <dbReference type="ChEBI" id="CHEBI:18277"/>
        <dbReference type="ChEBI" id="CHEBI:33019"/>
        <dbReference type="ChEBI" id="CHEBI:58017"/>
        <dbReference type="EC" id="2.4.2.18"/>
    </reaction>
</comment>
<comment type="cofactor">
    <cofactor evidence="1">
        <name>Mg(2+)</name>
        <dbReference type="ChEBI" id="CHEBI:18420"/>
    </cofactor>
    <text evidence="1">Binds 2 magnesium ions per monomer.</text>
</comment>
<comment type="pathway">
    <text evidence="1">Amino-acid biosynthesis; L-tryptophan biosynthesis; L-tryptophan from chorismate: step 2/5.</text>
</comment>
<comment type="subunit">
    <text evidence="1">Homodimer.</text>
</comment>
<comment type="similarity">
    <text evidence="1">Belongs to the anthranilate phosphoribosyltransferase family.</text>
</comment>